<gene>
    <name type="primary">DDX1</name>
    <name type="ORF">QtsA-14927</name>
</gene>
<proteinExistence type="evidence at transcript level"/>
<reference key="1">
    <citation type="submission" date="2005-06" db="EMBL/GenBank/DDBJ databases">
        <title>DNA sequences of macaque genes expressed in brain or testis and its evolutionary implications.</title>
        <authorList>
            <consortium name="International consortium for macaque cDNA sequencing and analysis"/>
        </authorList>
    </citation>
    <scope>NUCLEOTIDE SEQUENCE [LARGE SCALE MRNA]</scope>
    <source>
        <tissue>Testis</tissue>
    </source>
</reference>
<feature type="chain" id="PRO_0000312357" description="ATP-dependent RNA helicase DDX1">
    <location>
        <begin position="1"/>
        <end position="740"/>
    </location>
</feature>
<feature type="domain" description="Helicase ATP-binding" evidence="3">
    <location>
        <begin position="2"/>
        <end position="428"/>
    </location>
</feature>
<feature type="domain" description="B30.2/SPRY" evidence="5">
    <location>
        <begin position="70"/>
        <end position="247"/>
    </location>
</feature>
<feature type="domain" description="Helicase C-terminal" evidence="4">
    <location>
        <begin position="493"/>
        <end position="681"/>
    </location>
</feature>
<feature type="region of interest" description="Necessary for interaction with RELA" evidence="2">
    <location>
        <begin position="1"/>
        <end position="525"/>
    </location>
</feature>
<feature type="region of interest" description="Interaction with dsRNA" evidence="1">
    <location>
        <begin position="1"/>
        <end position="448"/>
    </location>
</feature>
<feature type="region of interest" description="Necessary for interaction with HNRNPK" evidence="2">
    <location>
        <begin position="1"/>
        <end position="295"/>
    </location>
</feature>
<feature type="region of interest" description="Necessary for interaction with HNRNPK" evidence="2">
    <location>
        <begin position="525"/>
        <end position="740"/>
    </location>
</feature>
<feature type="short sequence motif" description="DEAD box" evidence="3">
    <location>
        <begin position="370"/>
        <end position="373"/>
    </location>
</feature>
<feature type="binding site" evidence="3">
    <location>
        <begin position="46"/>
        <end position="53"/>
    </location>
    <ligand>
        <name>ATP</name>
        <dbReference type="ChEBI" id="CHEBI:30616"/>
    </ligand>
</feature>
<feature type="modified residue" description="N6-acetyllysine" evidence="2">
    <location>
        <position position="239"/>
    </location>
</feature>
<feature type="modified residue" description="N6-acetyllysine" evidence="2">
    <location>
        <position position="268"/>
    </location>
</feature>
<feature type="modified residue" description="N6-acetyllysine; alternate" evidence="2">
    <location>
        <position position="281"/>
    </location>
</feature>
<feature type="modified residue" description="Phosphoserine" evidence="2">
    <location>
        <position position="481"/>
    </location>
</feature>
<feature type="cross-link" description="Glycyl lysine isopeptide (Lys-Gly) (interchain with G-Cter in SUMO2); alternate" evidence="2">
    <location>
        <position position="281"/>
    </location>
</feature>
<evidence type="ECO:0000250" key="1">
    <source>
        <dbReference type="UniProtKB" id="Q91VR5"/>
    </source>
</evidence>
<evidence type="ECO:0000250" key="2">
    <source>
        <dbReference type="UniProtKB" id="Q92499"/>
    </source>
</evidence>
<evidence type="ECO:0000255" key="3">
    <source>
        <dbReference type="PROSITE-ProRule" id="PRU00541"/>
    </source>
</evidence>
<evidence type="ECO:0000255" key="4">
    <source>
        <dbReference type="PROSITE-ProRule" id="PRU00542"/>
    </source>
</evidence>
<evidence type="ECO:0000255" key="5">
    <source>
        <dbReference type="PROSITE-ProRule" id="PRU00548"/>
    </source>
</evidence>
<evidence type="ECO:0000305" key="6"/>
<protein>
    <recommendedName>
        <fullName>ATP-dependent RNA helicase DDX1</fullName>
        <ecNumber>3.6.4.13</ecNumber>
    </recommendedName>
    <alternativeName>
        <fullName>DEAD box protein 1</fullName>
    </alternativeName>
</protein>
<name>DDX1_MACFA</name>
<dbReference type="EC" id="3.6.4.13"/>
<dbReference type="EMBL" id="AB168800">
    <property type="protein sequence ID" value="BAE00907.1"/>
    <property type="molecule type" value="mRNA"/>
</dbReference>
<dbReference type="RefSeq" id="NP_001270380.1">
    <property type="nucleotide sequence ID" value="NM_001283451.1"/>
</dbReference>
<dbReference type="RefSeq" id="XP_045225690.1">
    <property type="nucleotide sequence ID" value="XM_045369755.2"/>
</dbReference>
<dbReference type="SMR" id="Q4R7L5"/>
<dbReference type="STRING" id="9541.ENSMFAP00000035791"/>
<dbReference type="Ensembl" id="ENSMFAT00000080790.1">
    <property type="protein sequence ID" value="ENSMFAP00000060656.1"/>
    <property type="gene ID" value="ENSMFAG00000033987.2"/>
</dbReference>
<dbReference type="GeneID" id="101925685"/>
<dbReference type="VEuPathDB" id="HostDB:ENSMFAG00000033987"/>
<dbReference type="eggNOG" id="KOG0349">
    <property type="taxonomic scope" value="Eukaryota"/>
</dbReference>
<dbReference type="GeneTree" id="ENSGT00940000155678"/>
<dbReference type="Proteomes" id="UP000233100">
    <property type="component" value="Chromosome 13"/>
</dbReference>
<dbReference type="Bgee" id="ENSMFAG00000033987">
    <property type="expression patterns" value="Expressed in skeletal muscle tissue and 13 other cell types or tissues"/>
</dbReference>
<dbReference type="GO" id="GO:0071920">
    <property type="term" value="C:cleavage body"/>
    <property type="evidence" value="ECO:0000250"/>
    <property type="project" value="UniProtKB"/>
</dbReference>
<dbReference type="GO" id="GO:0005737">
    <property type="term" value="C:cytoplasm"/>
    <property type="evidence" value="ECO:0000250"/>
    <property type="project" value="UniProtKB"/>
</dbReference>
<dbReference type="GO" id="GO:0010494">
    <property type="term" value="C:cytoplasmic stress granule"/>
    <property type="evidence" value="ECO:0000250"/>
    <property type="project" value="UniProtKB"/>
</dbReference>
<dbReference type="GO" id="GO:0005829">
    <property type="term" value="C:cytosol"/>
    <property type="evidence" value="ECO:0000250"/>
    <property type="project" value="UniProtKB"/>
</dbReference>
<dbReference type="GO" id="GO:0005739">
    <property type="term" value="C:mitochondrion"/>
    <property type="evidence" value="ECO:0000250"/>
    <property type="project" value="UniProtKB"/>
</dbReference>
<dbReference type="GO" id="GO:0005634">
    <property type="term" value="C:nucleus"/>
    <property type="evidence" value="ECO:0000250"/>
    <property type="project" value="UniProtKB"/>
</dbReference>
<dbReference type="GO" id="GO:1990904">
    <property type="term" value="C:ribonucleoprotein complex"/>
    <property type="evidence" value="ECO:0007669"/>
    <property type="project" value="Ensembl"/>
</dbReference>
<dbReference type="GO" id="GO:0072669">
    <property type="term" value="C:tRNA-splicing ligase complex"/>
    <property type="evidence" value="ECO:0000250"/>
    <property type="project" value="UniProtKB"/>
</dbReference>
<dbReference type="GO" id="GO:0005524">
    <property type="term" value="F:ATP binding"/>
    <property type="evidence" value="ECO:0007669"/>
    <property type="project" value="UniProtKB-KW"/>
</dbReference>
<dbReference type="GO" id="GO:0016887">
    <property type="term" value="F:ATP hydrolysis activity"/>
    <property type="evidence" value="ECO:0007669"/>
    <property type="project" value="RHEA"/>
</dbReference>
<dbReference type="GO" id="GO:0003682">
    <property type="term" value="F:chromatin binding"/>
    <property type="evidence" value="ECO:0000250"/>
    <property type="project" value="UniProtKB"/>
</dbReference>
<dbReference type="GO" id="GO:0003677">
    <property type="term" value="F:DNA binding"/>
    <property type="evidence" value="ECO:0007669"/>
    <property type="project" value="UniProtKB-KW"/>
</dbReference>
<dbReference type="GO" id="GO:0033677">
    <property type="term" value="F:DNA/RNA helicase activity"/>
    <property type="evidence" value="ECO:0000250"/>
    <property type="project" value="UniProtKB"/>
</dbReference>
<dbReference type="GO" id="GO:0003725">
    <property type="term" value="F:double-stranded RNA binding"/>
    <property type="evidence" value="ECO:0007669"/>
    <property type="project" value="Ensembl"/>
</dbReference>
<dbReference type="GO" id="GO:0004527">
    <property type="term" value="F:exonuclease activity"/>
    <property type="evidence" value="ECO:0007669"/>
    <property type="project" value="UniProtKB-KW"/>
</dbReference>
<dbReference type="GO" id="GO:0004518">
    <property type="term" value="F:nuclease activity"/>
    <property type="evidence" value="ECO:0000250"/>
    <property type="project" value="UniProtKB"/>
</dbReference>
<dbReference type="GO" id="GO:0008143">
    <property type="term" value="F:poly(A) binding"/>
    <property type="evidence" value="ECO:0000250"/>
    <property type="project" value="UniProtKB"/>
</dbReference>
<dbReference type="GO" id="GO:0003724">
    <property type="term" value="F:RNA helicase activity"/>
    <property type="evidence" value="ECO:0000250"/>
    <property type="project" value="UniProtKB"/>
</dbReference>
<dbReference type="GO" id="GO:0003712">
    <property type="term" value="F:transcription coregulator activity"/>
    <property type="evidence" value="ECO:0000250"/>
    <property type="project" value="UniProtKB"/>
</dbReference>
<dbReference type="GO" id="GO:0051607">
    <property type="term" value="P:defense response to virus"/>
    <property type="evidence" value="ECO:0007669"/>
    <property type="project" value="UniProtKB-KW"/>
</dbReference>
<dbReference type="GO" id="GO:0006302">
    <property type="term" value="P:double-strand break repair"/>
    <property type="evidence" value="ECO:0000250"/>
    <property type="project" value="UniProtKB"/>
</dbReference>
<dbReference type="GO" id="GO:0045087">
    <property type="term" value="P:innate immune response"/>
    <property type="evidence" value="ECO:0007669"/>
    <property type="project" value="UniProtKB-KW"/>
</dbReference>
<dbReference type="GO" id="GO:0006397">
    <property type="term" value="P:mRNA processing"/>
    <property type="evidence" value="ECO:0007669"/>
    <property type="project" value="UniProtKB-KW"/>
</dbReference>
<dbReference type="GO" id="GO:0043123">
    <property type="term" value="P:positive regulation of canonical NF-kappaB signal transduction"/>
    <property type="evidence" value="ECO:0000250"/>
    <property type="project" value="UniProtKB"/>
</dbReference>
<dbReference type="GO" id="GO:0002735">
    <property type="term" value="P:positive regulation of myeloid dendritic cell cytokine production"/>
    <property type="evidence" value="ECO:0007669"/>
    <property type="project" value="Ensembl"/>
</dbReference>
<dbReference type="GO" id="GO:1903608">
    <property type="term" value="P:protein localization to cytoplasmic stress granule"/>
    <property type="evidence" value="ECO:0007669"/>
    <property type="project" value="Ensembl"/>
</dbReference>
<dbReference type="GO" id="GO:0043330">
    <property type="term" value="P:response to exogenous dsRNA"/>
    <property type="evidence" value="ECO:0007669"/>
    <property type="project" value="Ensembl"/>
</dbReference>
<dbReference type="GO" id="GO:0006388">
    <property type="term" value="P:tRNA splicing, via endonucleolytic cleavage and ligation"/>
    <property type="evidence" value="ECO:0000250"/>
    <property type="project" value="UniProtKB"/>
</dbReference>
<dbReference type="CDD" id="cd17938">
    <property type="entry name" value="DEADc_DDX1"/>
    <property type="match status" value="1"/>
</dbReference>
<dbReference type="CDD" id="cd18787">
    <property type="entry name" value="SF2_C_DEAD"/>
    <property type="match status" value="1"/>
</dbReference>
<dbReference type="CDD" id="cd12873">
    <property type="entry name" value="SPRY_DDX1"/>
    <property type="match status" value="1"/>
</dbReference>
<dbReference type="FunFam" id="2.60.120.920:FF:000013">
    <property type="entry name" value="ATP-dependent RNA helicase DDX1"/>
    <property type="match status" value="1"/>
</dbReference>
<dbReference type="FunFam" id="3.40.50.300:FF:000652">
    <property type="entry name" value="ATP-dependent RNA helicase DDX1"/>
    <property type="match status" value="1"/>
</dbReference>
<dbReference type="FunFam" id="3.40.50.300:FF:000708">
    <property type="entry name" value="ATP-dependent RNA helicase DDX1"/>
    <property type="match status" value="1"/>
</dbReference>
<dbReference type="FunFam" id="3.40.50.300:FF:000716">
    <property type="entry name" value="ATP-dependent RNA helicase DDX1"/>
    <property type="match status" value="1"/>
</dbReference>
<dbReference type="Gene3D" id="2.60.120.920">
    <property type="match status" value="1"/>
</dbReference>
<dbReference type="Gene3D" id="3.40.50.300">
    <property type="entry name" value="P-loop containing nucleotide triphosphate hydrolases"/>
    <property type="match status" value="3"/>
</dbReference>
<dbReference type="InterPro" id="IPR001870">
    <property type="entry name" value="B30.2/SPRY"/>
</dbReference>
<dbReference type="InterPro" id="IPR043136">
    <property type="entry name" value="B30.2/SPRY_sf"/>
</dbReference>
<dbReference type="InterPro" id="IPR013320">
    <property type="entry name" value="ConA-like_dom_sf"/>
</dbReference>
<dbReference type="InterPro" id="IPR011545">
    <property type="entry name" value="DEAD/DEAH_box_helicase_dom"/>
</dbReference>
<dbReference type="InterPro" id="IPR014001">
    <property type="entry name" value="Helicase_ATP-bd"/>
</dbReference>
<dbReference type="InterPro" id="IPR001650">
    <property type="entry name" value="Helicase_C-like"/>
</dbReference>
<dbReference type="InterPro" id="IPR027417">
    <property type="entry name" value="P-loop_NTPase"/>
</dbReference>
<dbReference type="InterPro" id="IPR014014">
    <property type="entry name" value="RNA_helicase_DEAD_Q_motif"/>
</dbReference>
<dbReference type="InterPro" id="IPR003877">
    <property type="entry name" value="SPRY_dom"/>
</dbReference>
<dbReference type="PANTHER" id="PTHR24031">
    <property type="entry name" value="RNA HELICASE"/>
    <property type="match status" value="1"/>
</dbReference>
<dbReference type="Pfam" id="PF00270">
    <property type="entry name" value="DEAD"/>
    <property type="match status" value="2"/>
</dbReference>
<dbReference type="Pfam" id="PF00271">
    <property type="entry name" value="Helicase_C"/>
    <property type="match status" value="1"/>
</dbReference>
<dbReference type="Pfam" id="PF00622">
    <property type="entry name" value="SPRY"/>
    <property type="match status" value="1"/>
</dbReference>
<dbReference type="SMART" id="SM00487">
    <property type="entry name" value="DEXDc"/>
    <property type="match status" value="1"/>
</dbReference>
<dbReference type="SMART" id="SM00490">
    <property type="entry name" value="HELICc"/>
    <property type="match status" value="1"/>
</dbReference>
<dbReference type="SMART" id="SM00449">
    <property type="entry name" value="SPRY"/>
    <property type="match status" value="1"/>
</dbReference>
<dbReference type="SUPFAM" id="SSF49899">
    <property type="entry name" value="Concanavalin A-like lectins/glucanases"/>
    <property type="match status" value="1"/>
</dbReference>
<dbReference type="SUPFAM" id="SSF52540">
    <property type="entry name" value="P-loop containing nucleoside triphosphate hydrolases"/>
    <property type="match status" value="2"/>
</dbReference>
<dbReference type="PROSITE" id="PS50188">
    <property type="entry name" value="B302_SPRY"/>
    <property type="match status" value="1"/>
</dbReference>
<dbReference type="PROSITE" id="PS51192">
    <property type="entry name" value="HELICASE_ATP_BIND_1"/>
    <property type="match status" value="2"/>
</dbReference>
<dbReference type="PROSITE" id="PS51194">
    <property type="entry name" value="HELICASE_CTER"/>
    <property type="match status" value="1"/>
</dbReference>
<dbReference type="PROSITE" id="PS51195">
    <property type="entry name" value="Q_MOTIF"/>
    <property type="match status" value="1"/>
</dbReference>
<accession>Q4R7L5</accession>
<keyword id="KW-0007">Acetylation</keyword>
<keyword id="KW-0010">Activator</keyword>
<keyword id="KW-0051">Antiviral defense</keyword>
<keyword id="KW-0067">ATP-binding</keyword>
<keyword id="KW-0963">Cytoplasm</keyword>
<keyword id="KW-0238">DNA-binding</keyword>
<keyword id="KW-0269">Exonuclease</keyword>
<keyword id="KW-0347">Helicase</keyword>
<keyword id="KW-0378">Hydrolase</keyword>
<keyword id="KW-0391">Immunity</keyword>
<keyword id="KW-0399">Innate immunity</keyword>
<keyword id="KW-1017">Isopeptide bond</keyword>
<keyword id="KW-0496">Mitochondrion</keyword>
<keyword id="KW-0507">mRNA processing</keyword>
<keyword id="KW-0540">Nuclease</keyword>
<keyword id="KW-0547">Nucleotide-binding</keyword>
<keyword id="KW-0539">Nucleus</keyword>
<keyword id="KW-0597">Phosphoprotein</keyword>
<keyword id="KW-1185">Reference proteome</keyword>
<keyword id="KW-0694">RNA-binding</keyword>
<keyword id="KW-0804">Transcription</keyword>
<keyword id="KW-0805">Transcription regulation</keyword>
<keyword id="KW-0819">tRNA processing</keyword>
<keyword id="KW-0832">Ubl conjugation</keyword>
<organism>
    <name type="scientific">Macaca fascicularis</name>
    <name type="common">Crab-eating macaque</name>
    <name type="synonym">Cynomolgus monkey</name>
    <dbReference type="NCBI Taxonomy" id="9541"/>
    <lineage>
        <taxon>Eukaryota</taxon>
        <taxon>Metazoa</taxon>
        <taxon>Chordata</taxon>
        <taxon>Craniata</taxon>
        <taxon>Vertebrata</taxon>
        <taxon>Euteleostomi</taxon>
        <taxon>Mammalia</taxon>
        <taxon>Eutheria</taxon>
        <taxon>Euarchontoglires</taxon>
        <taxon>Primates</taxon>
        <taxon>Haplorrhini</taxon>
        <taxon>Catarrhini</taxon>
        <taxon>Cercopithecidae</taxon>
        <taxon>Cercopithecinae</taxon>
        <taxon>Macaca</taxon>
    </lineage>
</organism>
<comment type="function">
    <text evidence="1 2">Acts as an ATP-dependent RNA helicase, able to unwind both RNA-RNA and RNA-DNA duplexes. Possesses 5' single-stranded RNA overhang nuclease activity. Possesses ATPase activity on various RNA, but not DNA polynucleotides. May play a role in RNA clearance at DNA double-strand breaks (DSBs), thereby facilitating the template-guided repair of transcriptionally active regions of the genome. Together with RELA, acts as a coactivator to enhance NF-kappa-B-mediated transcriptional activation. Acts as a positive transcriptional regulator of cyclin CCND2 expression. Binds to the cyclin CCND2 promoter region. Associates with chromatin at the NF-kappa-B promoter region via association with RELA. Binds to poly(A) RNA. May be involved in 3'-end cleavage and polyadenylation of pre-mRNAs. Component of the tRNA-splicing ligase complex required to facilitate the enzymatic turnover of catalytic subunit RTCB: together with archease (ZBTB8OS), acts by facilitating the guanylylation of RTCB, a key intermediate step in tRNA ligation. Component of a multi-helicase-TICAM1 complex that acts as a cytoplasmic sensor of viral double-stranded RNA (dsRNA) and plays a role in the activation of a cascade of antiviral responses including the induction of pro-inflammatory cytokines via the adapter molecule TICAM1. Specifically binds (via helicase ATP-binding domain) on both short and long poly(I:C) dsRNA (By similarity).</text>
</comment>
<comment type="catalytic activity">
    <reaction>
        <text>ATP + H2O = ADP + phosphate + H(+)</text>
        <dbReference type="Rhea" id="RHEA:13065"/>
        <dbReference type="ChEBI" id="CHEBI:15377"/>
        <dbReference type="ChEBI" id="CHEBI:15378"/>
        <dbReference type="ChEBI" id="CHEBI:30616"/>
        <dbReference type="ChEBI" id="CHEBI:43474"/>
        <dbReference type="ChEBI" id="CHEBI:456216"/>
        <dbReference type="EC" id="3.6.4.13"/>
    </reaction>
</comment>
<comment type="subunit">
    <text evidence="1 2">Found in a multi-helicase-TICAM1 complex at least composed of DHX36, DDX1, DDX21 and TICAM1; this complex exists in resting cells with or without poly(I:C) RNA ligand stimulation (By similarity). Interacts with DHX36 (By similarity). Interacts (via B30.2/SPRY domain) with DDX21 (via N-terminus); this interaction serves as bridges to TICAM1 (By similarity). Interacts with FAM98A (via N- and C-terminus) (By similarity). Interacts with PHF5A (via C-terminus) (By similarity). Interacts with MBNL1 (By similarity). Interacts with CSTF2 (By similarity). Interacts with HNRNPK (By similarity). Interacts with ATM (By similarity). Interacts with RELA (via C-terminus) (By similarity). Component of the tRNA-splicing ligase complex (By similarity). Interacts with PQBP1 (By similarity). Interacts with ERCC6 (By similarity).</text>
</comment>
<comment type="subcellular location">
    <subcellularLocation>
        <location evidence="2">Nucleus</location>
    </subcellularLocation>
    <subcellularLocation>
        <location evidence="2">Cytoplasm</location>
    </subcellularLocation>
    <subcellularLocation>
        <location evidence="2">Cytoplasmic granule</location>
    </subcellularLocation>
    <subcellularLocation>
        <location evidence="1">Cytoplasm</location>
        <location evidence="1">Cytosol</location>
    </subcellularLocation>
    <subcellularLocation>
        <location evidence="1">Mitochondrion</location>
    </subcellularLocation>
    <text evidence="1 2">Localized with MBNL1, TIAL1 and YBX1 in stress granules upon stress. Localized with CSTF2 in cleavage bodies. Forms large aggregates called DDX1 bodies. Relocalized into multiple foci (IR-induced foci or IRIF) after IR treatment, a process that depends on the presence of chromosomal DNA and/or RNA-DNA duplexes. Relocalized at sites of DNA double-strand breaks (DSBs) in an ATM-dependent manner after IR treatment. Colocalized with RELA in the nucleus upon TNF-alpha induction. Enters into the nucleus in case of active transcription while it accumulates in cytosol when transcription level is low. Colocalizes in the cytosol with DDX21, DHX36 and TICAM1. Colocalizes in the mitochondria with TICAM1 and poly(I:C) RNA ligand. The multi-helicase-TICAM1 complex may translocate to the mitochondria upon poly(I:C) stimulation (By similarity).</text>
</comment>
<comment type="domain">
    <text evidence="2">The helicase domain is involved in the stimulation of RELA transcriptional activity.</text>
</comment>
<comment type="PTM">
    <text evidence="2">Phosphorylated by ATM kinase; phosphorylation is increased in response to ionizing radiation (IR).</text>
</comment>
<comment type="similarity">
    <text evidence="6">Belongs to the DEAD box helicase family. DDX1 subfamily.</text>
</comment>
<sequence>MAAFSEMGVMPEIAQAVEEMDWLLPTDIQAESIPLILGGGDVLMAAETGSGKTGAFSIPVIQIVYETLKDQQEGKKGKTTIKTGASVLNKWQMNPYDRGSAFAIGSDGLCCQSREVKEWHGCRATKGLMKGKHYYEVSCHDQGLCRVGWSTMQASLDLGTDKFGFGFGGTGKKSHNKQFDNYGEEFTMHDTIGCYLDIDKGHVKFSKNGKDLGLAFEIPPHMKNQALFPACVLKNAELKFNFGEEEFKFPPKDGFVALSKAPDGYIVKSQHSGNAQVTQTKFLPNAPKALIVEPSRELAEQTLNNIKQFKKYIDNPKLRELLIIGGVAARDQLSVLENGVDIVVGTPGRLDDLVSTGKLNLSQVRFLVLDEADGLLTQGYSDFINRMHNQIPQVTSDGKRLQVIVCSATLHSFDVKKLSEKIMHFPTWVDLKGEDSVPDTVHHVVVPVNPKTDRLWERLGKNHIRTDDVHAKDNTRPGANSPEMWSEAIKILKGEYAVRAIKEHKMDQAIIFCRTKIDCDNLEQYFMQQGGGPDKKGHQFSCVCLHGDRKPHERKQNLERFKKGDVRFLICTDVAARGIDIHGVPYVINVTLPDEKQNYVHRIGRVGRAERMGLAISLVATEKEKVWYHVCSSRGKGCYNTRLKEDGGCTIWYNEMQLLSEIEEHLNCTISQVEPDIKVPVDEFDGKVTYGQKRAAGGGSYKGHVDILAPTVQELAALEKEAQTSFLHLGYLPNQLFRTF</sequence>